<gene>
    <name evidence="1" type="primary">pyrH</name>
    <name type="ordered locus">ZMO1154</name>
</gene>
<comment type="function">
    <text evidence="1">Catalyzes the reversible phosphorylation of UMP to UDP.</text>
</comment>
<comment type="catalytic activity">
    <reaction evidence="1">
        <text>UMP + ATP = UDP + ADP</text>
        <dbReference type="Rhea" id="RHEA:24400"/>
        <dbReference type="ChEBI" id="CHEBI:30616"/>
        <dbReference type="ChEBI" id="CHEBI:57865"/>
        <dbReference type="ChEBI" id="CHEBI:58223"/>
        <dbReference type="ChEBI" id="CHEBI:456216"/>
        <dbReference type="EC" id="2.7.4.22"/>
    </reaction>
</comment>
<comment type="activity regulation">
    <text evidence="1">Inhibited by UTP.</text>
</comment>
<comment type="pathway">
    <text evidence="1">Pyrimidine metabolism; CTP biosynthesis via de novo pathway; UDP from UMP (UMPK route): step 1/1.</text>
</comment>
<comment type="subunit">
    <text evidence="1">Homohexamer.</text>
</comment>
<comment type="subcellular location">
    <subcellularLocation>
        <location evidence="1">Cytoplasm</location>
    </subcellularLocation>
</comment>
<comment type="similarity">
    <text evidence="1">Belongs to the UMP kinase family.</text>
</comment>
<comment type="sequence caution" evidence="2">
    <conflict type="erroneous initiation">
        <sequence resource="EMBL-CDS" id="AAD29656"/>
    </conflict>
</comment>
<name>PYRH_ZYMMO</name>
<dbReference type="EC" id="2.7.4.22" evidence="1"/>
<dbReference type="EMBL" id="AF124757">
    <property type="protein sequence ID" value="AAD29656.1"/>
    <property type="status" value="ALT_INIT"/>
    <property type="molecule type" value="Genomic_DNA"/>
</dbReference>
<dbReference type="EMBL" id="AE008692">
    <property type="protein sequence ID" value="AAV89778.2"/>
    <property type="molecule type" value="Genomic_DNA"/>
</dbReference>
<dbReference type="SMR" id="Q9X5E9"/>
<dbReference type="STRING" id="264203.ZMO1154"/>
<dbReference type="KEGG" id="zmo:ZMO1154"/>
<dbReference type="eggNOG" id="COG0528">
    <property type="taxonomic scope" value="Bacteria"/>
</dbReference>
<dbReference type="HOGENOM" id="CLU_033861_0_0_5"/>
<dbReference type="UniPathway" id="UPA00159">
    <property type="reaction ID" value="UER00275"/>
</dbReference>
<dbReference type="Proteomes" id="UP000001173">
    <property type="component" value="Chromosome"/>
</dbReference>
<dbReference type="GO" id="GO:0005737">
    <property type="term" value="C:cytoplasm"/>
    <property type="evidence" value="ECO:0007669"/>
    <property type="project" value="UniProtKB-SubCell"/>
</dbReference>
<dbReference type="GO" id="GO:0005524">
    <property type="term" value="F:ATP binding"/>
    <property type="evidence" value="ECO:0007669"/>
    <property type="project" value="UniProtKB-KW"/>
</dbReference>
<dbReference type="GO" id="GO:0033862">
    <property type="term" value="F:UMP kinase activity"/>
    <property type="evidence" value="ECO:0007669"/>
    <property type="project" value="UniProtKB-EC"/>
</dbReference>
<dbReference type="GO" id="GO:0044210">
    <property type="term" value="P:'de novo' CTP biosynthetic process"/>
    <property type="evidence" value="ECO:0007669"/>
    <property type="project" value="UniProtKB-UniRule"/>
</dbReference>
<dbReference type="GO" id="GO:0006225">
    <property type="term" value="P:UDP biosynthetic process"/>
    <property type="evidence" value="ECO:0007669"/>
    <property type="project" value="TreeGrafter"/>
</dbReference>
<dbReference type="CDD" id="cd04254">
    <property type="entry name" value="AAK_UMPK-PyrH-Ec"/>
    <property type="match status" value="1"/>
</dbReference>
<dbReference type="FunFam" id="3.40.1160.10:FF:000001">
    <property type="entry name" value="Uridylate kinase"/>
    <property type="match status" value="1"/>
</dbReference>
<dbReference type="Gene3D" id="3.40.1160.10">
    <property type="entry name" value="Acetylglutamate kinase-like"/>
    <property type="match status" value="1"/>
</dbReference>
<dbReference type="HAMAP" id="MF_01220_B">
    <property type="entry name" value="PyrH_B"/>
    <property type="match status" value="1"/>
</dbReference>
<dbReference type="InterPro" id="IPR036393">
    <property type="entry name" value="AceGlu_kinase-like_sf"/>
</dbReference>
<dbReference type="InterPro" id="IPR001048">
    <property type="entry name" value="Asp/Glu/Uridylate_kinase"/>
</dbReference>
<dbReference type="InterPro" id="IPR011817">
    <property type="entry name" value="Uridylate_kinase"/>
</dbReference>
<dbReference type="InterPro" id="IPR015963">
    <property type="entry name" value="Uridylate_kinase_bac"/>
</dbReference>
<dbReference type="NCBIfam" id="TIGR02075">
    <property type="entry name" value="pyrH_bact"/>
    <property type="match status" value="1"/>
</dbReference>
<dbReference type="PANTHER" id="PTHR42833">
    <property type="entry name" value="URIDYLATE KINASE"/>
    <property type="match status" value="1"/>
</dbReference>
<dbReference type="PANTHER" id="PTHR42833:SF4">
    <property type="entry name" value="URIDYLATE KINASE PUMPKIN, CHLOROPLASTIC"/>
    <property type="match status" value="1"/>
</dbReference>
<dbReference type="Pfam" id="PF00696">
    <property type="entry name" value="AA_kinase"/>
    <property type="match status" value="1"/>
</dbReference>
<dbReference type="PIRSF" id="PIRSF005650">
    <property type="entry name" value="Uridylate_kin"/>
    <property type="match status" value="1"/>
</dbReference>
<dbReference type="SUPFAM" id="SSF53633">
    <property type="entry name" value="Carbamate kinase-like"/>
    <property type="match status" value="1"/>
</dbReference>
<sequence>MYKRPRFNRVLLKLSGEVLMGPGQFGIDPATVARVADEIRAAREAGYQLCIVVGGGNIFRGLAATARGIERSSADYMGMLATVMNAIAVQNALENLGVDTRVQSAIPMPTVCEPFIRRRAERHMEKGRVVIFAAGTGNPFFTTDSGAALRAAEMKCDALFKGTSVDGVYDADPKKVKEARRYDCVSFNRVLADDLKVMDASATALCRDNNIPIVVFNIREQGNFSRVLKGDGVSTIVCNEEE</sequence>
<accession>Q9X5E9</accession>
<accession>Q5NND2</accession>
<keyword id="KW-0067">ATP-binding</keyword>
<keyword id="KW-0963">Cytoplasm</keyword>
<keyword id="KW-0418">Kinase</keyword>
<keyword id="KW-0547">Nucleotide-binding</keyword>
<keyword id="KW-0665">Pyrimidine biosynthesis</keyword>
<keyword id="KW-1185">Reference proteome</keyword>
<keyword id="KW-0808">Transferase</keyword>
<reference key="1">
    <citation type="submission" date="1999-01" db="EMBL/GenBank/DDBJ databases">
        <title>Sequence analysis of 43D2 fosmid clone of Zymomonas mobilis ZM4.</title>
        <authorList>
            <person name="Lee H.J."/>
            <person name="Kang H.S."/>
        </authorList>
    </citation>
    <scope>NUCLEOTIDE SEQUENCE [GENOMIC DNA]</scope>
    <source>
        <strain>ATCC 31821 / ZM4 / CP4</strain>
    </source>
</reference>
<reference key="2">
    <citation type="journal article" date="2005" name="Nat. Biotechnol.">
        <title>The genome sequence of the ethanologenic bacterium Zymomonas mobilis ZM4.</title>
        <authorList>
            <person name="Seo J.-S."/>
            <person name="Chong H."/>
            <person name="Park H.S."/>
            <person name="Yoon K.-O."/>
            <person name="Jung C."/>
            <person name="Kim J.J."/>
            <person name="Hong J.H."/>
            <person name="Kim H."/>
            <person name="Kim J.-H."/>
            <person name="Kil J.-I."/>
            <person name="Park C.J."/>
            <person name="Oh H.-M."/>
            <person name="Lee J.-S."/>
            <person name="Jin S.-J."/>
            <person name="Um H.-W."/>
            <person name="Lee H.-J."/>
            <person name="Oh S.-J."/>
            <person name="Kim J.Y."/>
            <person name="Kang H.L."/>
            <person name="Lee S.Y."/>
            <person name="Lee K.J."/>
            <person name="Kang H.S."/>
        </authorList>
    </citation>
    <scope>NUCLEOTIDE SEQUENCE [LARGE SCALE GENOMIC DNA]</scope>
    <source>
        <strain>ATCC 31821 / ZM4 / CP4</strain>
    </source>
</reference>
<evidence type="ECO:0000255" key="1">
    <source>
        <dbReference type="HAMAP-Rule" id="MF_01220"/>
    </source>
</evidence>
<evidence type="ECO:0000305" key="2"/>
<feature type="chain" id="PRO_0000143912" description="Uridylate kinase">
    <location>
        <begin position="1"/>
        <end position="242"/>
    </location>
</feature>
<feature type="binding site" evidence="1">
    <location>
        <begin position="13"/>
        <end position="16"/>
    </location>
    <ligand>
        <name>ATP</name>
        <dbReference type="ChEBI" id="CHEBI:30616"/>
    </ligand>
</feature>
<feature type="binding site" evidence="1">
    <location>
        <position position="55"/>
    </location>
    <ligand>
        <name>UMP</name>
        <dbReference type="ChEBI" id="CHEBI:57865"/>
    </ligand>
</feature>
<feature type="binding site" evidence="1">
    <location>
        <position position="56"/>
    </location>
    <ligand>
        <name>ATP</name>
        <dbReference type="ChEBI" id="CHEBI:30616"/>
    </ligand>
</feature>
<feature type="binding site" evidence="1">
    <location>
        <position position="60"/>
    </location>
    <ligand>
        <name>ATP</name>
        <dbReference type="ChEBI" id="CHEBI:30616"/>
    </ligand>
</feature>
<feature type="binding site" evidence="1">
    <location>
        <position position="75"/>
    </location>
    <ligand>
        <name>UMP</name>
        <dbReference type="ChEBI" id="CHEBI:57865"/>
    </ligand>
</feature>
<feature type="binding site" evidence="1">
    <location>
        <begin position="136"/>
        <end position="143"/>
    </location>
    <ligand>
        <name>UMP</name>
        <dbReference type="ChEBI" id="CHEBI:57865"/>
    </ligand>
</feature>
<feature type="binding site" evidence="1">
    <location>
        <position position="163"/>
    </location>
    <ligand>
        <name>ATP</name>
        <dbReference type="ChEBI" id="CHEBI:30616"/>
    </ligand>
</feature>
<feature type="binding site" evidence="1">
    <location>
        <position position="169"/>
    </location>
    <ligand>
        <name>ATP</name>
        <dbReference type="ChEBI" id="CHEBI:30616"/>
    </ligand>
</feature>
<feature type="binding site" evidence="1">
    <location>
        <position position="172"/>
    </location>
    <ligand>
        <name>ATP</name>
        <dbReference type="ChEBI" id="CHEBI:30616"/>
    </ligand>
</feature>
<feature type="sequence conflict" description="In Ref. 1; AAD29656." evidence="2" ref="1">
    <original>F</original>
    <variation>Y</variation>
    <location>
        <position position="59"/>
    </location>
</feature>
<feature type="sequence conflict" description="In Ref. 1; AAD29656." evidence="2" ref="1">
    <original>E</original>
    <variation>K</variation>
    <location>
        <position position="241"/>
    </location>
</feature>
<protein>
    <recommendedName>
        <fullName evidence="1">Uridylate kinase</fullName>
        <shortName evidence="1">UK</shortName>
        <ecNumber evidence="1">2.7.4.22</ecNumber>
    </recommendedName>
    <alternativeName>
        <fullName evidence="1">Uridine monophosphate kinase</fullName>
        <shortName evidence="1">UMP kinase</shortName>
        <shortName evidence="1">UMPK</shortName>
    </alternativeName>
</protein>
<proteinExistence type="inferred from homology"/>
<organism>
    <name type="scientific">Zymomonas mobilis subsp. mobilis (strain ATCC 31821 / ZM4 / CP4)</name>
    <dbReference type="NCBI Taxonomy" id="264203"/>
    <lineage>
        <taxon>Bacteria</taxon>
        <taxon>Pseudomonadati</taxon>
        <taxon>Pseudomonadota</taxon>
        <taxon>Alphaproteobacteria</taxon>
        <taxon>Sphingomonadales</taxon>
        <taxon>Zymomonadaceae</taxon>
        <taxon>Zymomonas</taxon>
    </lineage>
</organism>